<sequence>MNIIESDTIANKAKIAIAVVRFNRFVNNNLLEGALDVLKRIGHVKDENITIIWVPGSYELPLIAKALAISHKYDGIIALGTVIRGFTIHFEFVAKECSSGLSRISMENTLPIGFGLLTTDNISQAIERSGIKANNKGSEAALAVLEMINILKIIKNSS</sequence>
<dbReference type="EC" id="2.5.1.78" evidence="1"/>
<dbReference type="EMBL" id="CP000016">
    <property type="protein sequence ID" value="AAZ40872.1"/>
    <property type="molecule type" value="Genomic_DNA"/>
</dbReference>
<dbReference type="RefSeq" id="WP_011282779.1">
    <property type="nucleotide sequence ID" value="NC_007292.1"/>
</dbReference>
<dbReference type="SMR" id="Q494E6"/>
<dbReference type="STRING" id="291272.BPEN_241"/>
<dbReference type="KEGG" id="bpn:BPEN_241"/>
<dbReference type="eggNOG" id="COG0054">
    <property type="taxonomic scope" value="Bacteria"/>
</dbReference>
<dbReference type="HOGENOM" id="CLU_089358_1_1_6"/>
<dbReference type="OrthoDB" id="9809709at2"/>
<dbReference type="UniPathway" id="UPA00275">
    <property type="reaction ID" value="UER00404"/>
</dbReference>
<dbReference type="Proteomes" id="UP000007794">
    <property type="component" value="Chromosome"/>
</dbReference>
<dbReference type="GO" id="GO:0005829">
    <property type="term" value="C:cytosol"/>
    <property type="evidence" value="ECO:0007669"/>
    <property type="project" value="TreeGrafter"/>
</dbReference>
<dbReference type="GO" id="GO:0009349">
    <property type="term" value="C:riboflavin synthase complex"/>
    <property type="evidence" value="ECO:0007669"/>
    <property type="project" value="InterPro"/>
</dbReference>
<dbReference type="GO" id="GO:0000906">
    <property type="term" value="F:6,7-dimethyl-8-ribityllumazine synthase activity"/>
    <property type="evidence" value="ECO:0007669"/>
    <property type="project" value="UniProtKB-UniRule"/>
</dbReference>
<dbReference type="GO" id="GO:0009231">
    <property type="term" value="P:riboflavin biosynthetic process"/>
    <property type="evidence" value="ECO:0007669"/>
    <property type="project" value="UniProtKB-UniRule"/>
</dbReference>
<dbReference type="CDD" id="cd09209">
    <property type="entry name" value="Lumazine_synthase-I"/>
    <property type="match status" value="1"/>
</dbReference>
<dbReference type="FunFam" id="3.40.50.960:FF:000001">
    <property type="entry name" value="6,7-dimethyl-8-ribityllumazine synthase"/>
    <property type="match status" value="1"/>
</dbReference>
<dbReference type="Gene3D" id="3.40.50.960">
    <property type="entry name" value="Lumazine/riboflavin synthase"/>
    <property type="match status" value="1"/>
</dbReference>
<dbReference type="HAMAP" id="MF_00178">
    <property type="entry name" value="Lumazine_synth"/>
    <property type="match status" value="1"/>
</dbReference>
<dbReference type="InterPro" id="IPR034964">
    <property type="entry name" value="LS"/>
</dbReference>
<dbReference type="InterPro" id="IPR002180">
    <property type="entry name" value="LS/RS"/>
</dbReference>
<dbReference type="InterPro" id="IPR036467">
    <property type="entry name" value="LS/RS_sf"/>
</dbReference>
<dbReference type="NCBIfam" id="TIGR00114">
    <property type="entry name" value="lumazine-synth"/>
    <property type="match status" value="1"/>
</dbReference>
<dbReference type="NCBIfam" id="NF000812">
    <property type="entry name" value="PRK00061.1-4"/>
    <property type="match status" value="1"/>
</dbReference>
<dbReference type="PANTHER" id="PTHR21058:SF0">
    <property type="entry name" value="6,7-DIMETHYL-8-RIBITYLLUMAZINE SYNTHASE"/>
    <property type="match status" value="1"/>
</dbReference>
<dbReference type="PANTHER" id="PTHR21058">
    <property type="entry name" value="6,7-DIMETHYL-8-RIBITYLLUMAZINE SYNTHASE DMRL SYNTHASE LUMAZINE SYNTHASE"/>
    <property type="match status" value="1"/>
</dbReference>
<dbReference type="Pfam" id="PF00885">
    <property type="entry name" value="DMRL_synthase"/>
    <property type="match status" value="1"/>
</dbReference>
<dbReference type="SUPFAM" id="SSF52121">
    <property type="entry name" value="Lumazine synthase"/>
    <property type="match status" value="1"/>
</dbReference>
<keyword id="KW-1185">Reference proteome</keyword>
<keyword id="KW-0686">Riboflavin biosynthesis</keyword>
<keyword id="KW-0808">Transferase</keyword>
<protein>
    <recommendedName>
        <fullName evidence="1">6,7-dimethyl-8-ribityllumazine synthase</fullName>
        <shortName evidence="1">DMRL synthase</shortName>
        <shortName evidence="1">LS</shortName>
        <shortName evidence="1">Lumazine synthase</shortName>
        <ecNumber evidence="1">2.5.1.78</ecNumber>
    </recommendedName>
</protein>
<gene>
    <name evidence="1" type="primary">ribH</name>
    <name type="ordered locus">BPEN_241</name>
</gene>
<evidence type="ECO:0000255" key="1">
    <source>
        <dbReference type="HAMAP-Rule" id="MF_00178"/>
    </source>
</evidence>
<feature type="chain" id="PRO_1000040375" description="6,7-dimethyl-8-ribityllumazine synthase">
    <location>
        <begin position="1"/>
        <end position="158"/>
    </location>
</feature>
<feature type="active site" description="Proton donor" evidence="1">
    <location>
        <position position="89"/>
    </location>
</feature>
<feature type="binding site" evidence="1">
    <location>
        <position position="22"/>
    </location>
    <ligand>
        <name>5-amino-6-(D-ribitylamino)uracil</name>
        <dbReference type="ChEBI" id="CHEBI:15934"/>
    </ligand>
</feature>
<feature type="binding site" evidence="1">
    <location>
        <begin position="57"/>
        <end position="59"/>
    </location>
    <ligand>
        <name>5-amino-6-(D-ribitylamino)uracil</name>
        <dbReference type="ChEBI" id="CHEBI:15934"/>
    </ligand>
</feature>
<feature type="binding site" evidence="1">
    <location>
        <begin position="81"/>
        <end position="83"/>
    </location>
    <ligand>
        <name>5-amino-6-(D-ribitylamino)uracil</name>
        <dbReference type="ChEBI" id="CHEBI:15934"/>
    </ligand>
</feature>
<feature type="binding site" evidence="1">
    <location>
        <position position="114"/>
    </location>
    <ligand>
        <name>5-amino-6-(D-ribitylamino)uracil</name>
        <dbReference type="ChEBI" id="CHEBI:15934"/>
    </ligand>
</feature>
<feature type="binding site" evidence="1">
    <location>
        <position position="128"/>
    </location>
    <ligand>
        <name>(2S)-2-hydroxy-3-oxobutyl phosphate</name>
        <dbReference type="ChEBI" id="CHEBI:58830"/>
    </ligand>
</feature>
<proteinExistence type="inferred from homology"/>
<organism>
    <name type="scientific">Blochmanniella pennsylvanica (strain BPEN)</name>
    <dbReference type="NCBI Taxonomy" id="291272"/>
    <lineage>
        <taxon>Bacteria</taxon>
        <taxon>Pseudomonadati</taxon>
        <taxon>Pseudomonadota</taxon>
        <taxon>Gammaproteobacteria</taxon>
        <taxon>Enterobacterales</taxon>
        <taxon>Enterobacteriaceae</taxon>
        <taxon>ant endosymbionts</taxon>
        <taxon>Candidatus Blochmanniella</taxon>
    </lineage>
</organism>
<name>RISB_BLOPB</name>
<reference key="1">
    <citation type="journal article" date="2005" name="Genome Res.">
        <title>Genome sequence of Blochmannia pennsylvanicus indicates parallel evolutionary trends among bacterial mutualists of insects.</title>
        <authorList>
            <person name="Degnan P.H."/>
            <person name="Lazarus A.B."/>
            <person name="Wernegreen J.J."/>
        </authorList>
    </citation>
    <scope>NUCLEOTIDE SEQUENCE [LARGE SCALE GENOMIC DNA]</scope>
    <source>
        <strain>BPEN</strain>
    </source>
</reference>
<comment type="function">
    <text evidence="1">Catalyzes the formation of 6,7-dimethyl-8-ribityllumazine by condensation of 5-amino-6-(D-ribitylamino)uracil with 3,4-dihydroxy-2-butanone 4-phosphate. This is the penultimate step in the biosynthesis of riboflavin.</text>
</comment>
<comment type="catalytic activity">
    <reaction evidence="1">
        <text>(2S)-2-hydroxy-3-oxobutyl phosphate + 5-amino-6-(D-ribitylamino)uracil = 6,7-dimethyl-8-(1-D-ribityl)lumazine + phosphate + 2 H2O + H(+)</text>
        <dbReference type="Rhea" id="RHEA:26152"/>
        <dbReference type="ChEBI" id="CHEBI:15377"/>
        <dbReference type="ChEBI" id="CHEBI:15378"/>
        <dbReference type="ChEBI" id="CHEBI:15934"/>
        <dbReference type="ChEBI" id="CHEBI:43474"/>
        <dbReference type="ChEBI" id="CHEBI:58201"/>
        <dbReference type="ChEBI" id="CHEBI:58830"/>
        <dbReference type="EC" id="2.5.1.78"/>
    </reaction>
</comment>
<comment type="pathway">
    <text evidence="1">Cofactor biosynthesis; riboflavin biosynthesis; riboflavin from 2-hydroxy-3-oxobutyl phosphate and 5-amino-6-(D-ribitylamino)uracil: step 1/2.</text>
</comment>
<comment type="subunit">
    <text evidence="1">Forms an icosahedral capsid composed of 60 subunits, arranged as a dodecamer of pentamers.</text>
</comment>
<comment type="similarity">
    <text evidence="1">Belongs to the DMRL synthase family.</text>
</comment>
<accession>Q494E6</accession>